<sequence length="3371" mass="395870">PNEEAAAVWLSHGPAAERGFTIWPSAFVLQPKEKIVVSITWTPLKGGRIRETITFLVNDILKHQAILLGNAEEPKKKKRTLWDTINKKKASASSRHNKKASNIQNVNKTFNVSPKADRVRSPLQACENLATNGNCSPPESNPLILEENKLPISPISPASQECHRGTCLPLPVRRSTTYTSLPASENGGLVKADGANTAEDFHFNEKGITETSFDSIDNVNSQIEENGKLTLTPNYSSSLNITQSQGHFLSPDSFVNNSHASNNEPEFVKCLSPDMFVKGNTRPVILESKRVHEICRKILSPDSFINDNYGLNEDLETESINPILSPNQFLKDNMAYICVSQQTCQLPLSTGHFQDSQPPQDERKNAAVPCISECQQLESPKATFEASKALEVMSNSYTFKKQNQPKFSAVQDISSHSRKKPIKRRPILSATVTKRKPTCAVENQMETVKPKAKRCLNVVVGDCXKETDDQKEKDDFHPFLPIRDLIXXRPKSSKNIVTPPCKVASVARKRKSEGHTGDENVRITVTECXEXQEVKRPHFSPVESKTSTVKHTKKVVTSSLKRVSHREKLNLKKKTDSLGYRTPKTNRRTRPFVPVAQSNLTFIKPLKGIPRHPMPFAAKNMFYDERWKEKQEQGFTWWLNFILTPDDFTVKTNISEVNASTLLLGVESQHKVSVPKAPTKDEVSLRAYTARCRLNRLRRAACRLFTSEKMVKAMKKLEIEIEARRLIVRKDRHLWKDVGERQKVLNWLLSYNPLWLRIGLETIYGELVPLEDNSDVTGLAMFILNRLLWNPDIAAEYRHPSVPHLYRDGHEEALSKFTLKKLLLLICFLDYAKISRLIDHDPCLFCKDAEFKASKEILLAFSRDFLGGEGDLSRHLSLLGFPVTHVQMPFDEFDFAVKNLAVDLQCGVRLVRTMELLTQNWNLSKKLRIPAISRLQKMHNVDIVLEILKSRGIQLNDEHGNAILSKDIVDRHREKTLALLWKIALAFQVDISLNLDQLKEEIDFLKNTQSMKKTMSALSCRPDAVISKKRDERHSGPFEQCSESVKLLMDWVNAVCGFYNKKVENFTVSFSDGRVLCYLIHHYHPCYVPFDAICQRTTQTVECTHTGSVVLNSSSESDGSFLDFSLKPPDQENTSELYKELLENEKKNFQLVRSAARDLGGIPAMIHHSDMSNTIPDEKVVITYLSFLCARLLDLRKETRAARLIQTTWRQYKLKKDLKHHQERDKAARIIQSAIINFLTKQRFKKKVSAALVIQKYWRRALAKRKLLMLKKEKLERVHSKSASIIQRHWRRYSTRKQFLKLKYYSIFLQSKIRMIIAVASYKRYHWATVTIQRRWRAHVRSKQDRQRYELLRSSTLVIQFAFRRWRRRKRQSQINAAITLQRAFRQWRVQKCAQEERAAVVIQSWYRMHRELRKYIHLRSCVIIIQARFRCFQAQKLYTRTRESILTLQKHYRAYVKGKVERTGYLQKRAAAIRLQAAFRGRRARNLCRQIKAACVLQSYWRMRQDRLRFLNLKKNIIRLQAHIRRRQQLHTYQKMKKAALIIQIHFRAYMSAKEVLASYQKTRSAVIVLQSACRRMQARKKFLHILTSIVKIQSYYRAYASRRKFLRLKKATVKLQSIVRMKLARKQYLHLRAIAQQREEHRRASCIKLQAFLRGYLVRKQVRLQRKAAVSLQSYFRMRKMRLDYLKVCHAAVVIQRYYRAHRAGAQQRKHFLQVRRAVTYLQATYRGYKVRRQLQQQSAAALKIQAAFRGYRQRTKYQSVLQSALKIQRWYRTHKTVSAIRSHFFKTRTAAISLQSAYRGWKVRKQMRKEHEAAVKIQSAFRTARAQKEFRVLKTAASVIQQHLRARAAGRRQRTEYTALRRAAVMLQSAWRGRAARRRIQKQQRCAIIIQAYYRRHVQQKRWEIMKKAAHLIQMHYRAYRTGRKQHHLFLKTKXAAIILQSAFRGVRVRKKVKEMHQAAATIQSRYRAYQARKKYASYRAAAVIIQRWYRAAKLAGRQREEYLAVKKAALKIQAVYRGVRARRHIRRMHMAATLIKAAFKMQQSRRRYQQMRTAAIIIQVRYRAYCQGRAQRAKYLMILKAVALLQAALRGARVRQSLRRMRTAATLIQAHYRGRRQQAYFNKLKKVTKTVQQKYRAARERHAQLRRYNQLRRSAICIQAAFRGMRARRRLKAMHSAAAVIQRRFRTLGMRRRFLSLRKTAVWVQRKYRAKVCTRHHVQQLRLQKAAIKIQSWYRGWMVRKKIQEMRRAATVLQAAFRRHRTRARYQAWRCASQVIQQRFRAGRAARLQRRQYLQQRHSALVLQAAFRGMRVRRRLKRMHASATLIQSRFRSIMMRKRFLSLKKAAVFVQRKYRATICAKHHLHQFLELQKAIIIIQASYQRRMVKKQLQEMHRAAALIQASFRMHRARLAFQTWKHAAVLIQQRYRACRAAKLQRALYIRWRHSAVVIQAAYKGLKARQLLREKHRAAVIIQSTYRMYRQHFFYQKLQWATKVIQERYRASKRKALQHDALKAATCARAGFQDMVVRRLIEERRHQAAITIQEHFRAFKTRKHYLHFRAKVVFVQRRYRELMAVRTQAVICIQSCFRGFKARRGIQRMHLAATRIQSCYRRHRARADYQAKKRAVVVIQNHYRSYIRVKMERKEFLAIQKSARTIQAAFRGMKVRQKLKTMPDKKMAAPATQPAFYCHRTESQHEAGESPALVAQGLYKTSLVGPSQETEQHSQRKAAVTIQKAFRKMVTRRLEKQRRAAVRIQSFLQMAVYRRRFLQQKRAALTLQRCFRTQQSRKQFLLYREAAVGLQNPHRTSLPAKHQRELYLQIRSSVIIIQARVKGFIQKRKFRELKDSTIKIQAVWRRHKARKYLREVKAACRIQAWYRCWKARREYLAVLRAVRIIQRCFCXQQQRRRFLNVRASAVIIQRRWRTVLSGRTTHEQSLMTKRHQAACLIQANFRGYKARQAFLQQKSAALTIQRYIRARKAGKHQRMKYVELKKSTVVLQALVRGWLVRKRISEQRAKIRLLHFAAAAFYHLSALRIQRAYRRHVALKHANNKQLNSAICIQRWFRARSQRKRFLQKYSIINIQREAREQARQHSRAASVIQRAVRRFLLRKKQENFNKRIAKIQALWRGYSWRKKNDSTKTKAIRQRLQCVNREIREESKLYHRTAVALHHLLTYKYLSTVLEALKHLEAVTRLSSICCEKMAQSGAISKIFVLIRSCNRSVPCMEVIRYAMQVLLNVAKYEKTTSAIYDVENCVDTLLELMQMYQEKSGDKVADKSRSIFTKTCCLLAVLLKTTTRALDVQSRSKVVDRIYSLYKLTAHKHKVNTERILCKQKKNSSVSLSFFPETPVRTTMVSRLKPDWVLRRDNV</sequence>
<feature type="chain" id="PRO_0000191327" description="Abnormal spindle-like microcephaly-associated protein homolog">
    <location>
        <begin position="1" status="less than"/>
        <end position="3371" status="greater than"/>
    </location>
</feature>
<feature type="domain" description="Calponin-homology (CH) 1" evidence="4">
    <location>
        <begin position="852"/>
        <end position="988"/>
    </location>
</feature>
<feature type="domain" description="Calponin-homology (CH) 2" evidence="4">
    <location>
        <begin position="1042"/>
        <end position="1193"/>
    </location>
</feature>
<feature type="domain" description="IQ 1" evidence="5">
    <location>
        <begin position="1198"/>
        <end position="1227"/>
    </location>
</feature>
<feature type="domain" description="IQ 2" evidence="5">
    <location>
        <begin position="1396"/>
        <end position="1427"/>
    </location>
</feature>
<feature type="domain" description="IQ 3" evidence="5">
    <location>
        <begin position="1469"/>
        <end position="1500"/>
    </location>
</feature>
<feature type="domain" description="IQ 4" evidence="5">
    <location>
        <begin position="1564"/>
        <end position="1593"/>
    </location>
</feature>
<feature type="domain" description="IQ 5" evidence="5">
    <location>
        <begin position="1587"/>
        <end position="1616"/>
    </location>
</feature>
<feature type="domain" description="IQ 6" evidence="5">
    <location>
        <begin position="1610"/>
        <end position="1639"/>
    </location>
</feature>
<feature type="domain" description="IQ 7" evidence="5">
    <location>
        <begin position="1644"/>
        <end position="1673"/>
    </location>
</feature>
<feature type="domain" description="IQ 8" evidence="5">
    <location>
        <begin position="1667"/>
        <end position="1698"/>
    </location>
</feature>
<feature type="domain" description="IQ 9" evidence="5">
    <location>
        <begin position="1717"/>
        <end position="1746"/>
    </location>
</feature>
<feature type="domain" description="IQ 10" evidence="5">
    <location>
        <begin position="1740"/>
        <end position="1769"/>
    </location>
</feature>
<feature type="domain" description="IQ 11" evidence="5">
    <location>
        <begin position="1790"/>
        <end position="1819"/>
    </location>
</feature>
<feature type="domain" description="IQ 12" evidence="5">
    <location>
        <begin position="1813"/>
        <end position="1844"/>
    </location>
</feature>
<feature type="domain" description="IQ 13" evidence="5">
    <location>
        <begin position="1863"/>
        <end position="1894"/>
    </location>
</feature>
<feature type="domain" description="IQ 14" evidence="5">
    <location>
        <begin position="1886"/>
        <end position="1917"/>
    </location>
</feature>
<feature type="domain" description="IQ 15" evidence="5">
    <location>
        <begin position="1936"/>
        <end position="1965"/>
    </location>
</feature>
<feature type="domain" description="IQ 16" evidence="5">
    <location>
        <begin position="1959"/>
        <end position="1990"/>
    </location>
</feature>
<feature type="domain" description="IQ 17" evidence="5">
    <location>
        <begin position="2009"/>
        <end position="2040"/>
    </location>
</feature>
<feature type="domain" description="IQ 18" evidence="5">
    <location>
        <begin position="2032"/>
        <end position="2063"/>
    </location>
</feature>
<feature type="domain" description="IQ 19" evidence="5">
    <location>
        <begin position="2082"/>
        <end position="2113"/>
    </location>
</feature>
<feature type="domain" description="IQ 20" evidence="5">
    <location>
        <begin position="2105"/>
        <end position="2134"/>
    </location>
</feature>
<feature type="domain" description="IQ 21" evidence="5">
    <location>
        <begin position="2155"/>
        <end position="2186"/>
    </location>
</feature>
<feature type="domain" description="IQ 22" evidence="5">
    <location>
        <begin position="2227"/>
        <end position="2258"/>
    </location>
</feature>
<feature type="domain" description="IQ 23" evidence="5">
    <location>
        <begin position="2250"/>
        <end position="2281"/>
    </location>
</feature>
<feature type="domain" description="IQ 24" evidence="5">
    <location>
        <begin position="2300"/>
        <end position="2331"/>
    </location>
</feature>
<feature type="domain" description="IQ 25" evidence="5">
    <location>
        <begin position="2323"/>
        <end position="2354"/>
    </location>
</feature>
<feature type="domain" description="IQ 26" evidence="5">
    <location>
        <begin position="2396"/>
        <end position="2427"/>
    </location>
</feature>
<feature type="domain" description="IQ 27" evidence="5">
    <location>
        <begin position="2446"/>
        <end position="2477"/>
    </location>
</feature>
<feature type="domain" description="IQ 28" evidence="5">
    <location>
        <begin position="2539"/>
        <end position="2570"/>
    </location>
</feature>
<feature type="domain" description="IQ 29" evidence="5">
    <location>
        <begin position="2580"/>
        <end position="2609"/>
    </location>
</feature>
<feature type="domain" description="IQ 30" evidence="5">
    <location>
        <begin position="2603"/>
        <end position="2634"/>
    </location>
</feature>
<feature type="domain" description="IQ 31" evidence="5">
    <location>
        <begin position="2653"/>
        <end position="2682"/>
    </location>
</feature>
<feature type="domain" description="IQ 32" evidence="5">
    <location>
        <begin position="2729"/>
        <end position="2760"/>
    </location>
</feature>
<feature type="domain" description="IQ 33" evidence="5">
    <location>
        <begin position="2751"/>
        <end position="2780"/>
    </location>
</feature>
<feature type="domain" description="IQ 34" evidence="5">
    <location>
        <begin position="2824"/>
        <end position="2853"/>
    </location>
</feature>
<feature type="domain" description="IQ 35" evidence="5">
    <location>
        <begin position="2847"/>
        <end position="2878"/>
    </location>
</feature>
<feature type="domain" description="IQ 36" evidence="5">
    <location>
        <begin position="2869"/>
        <end position="2900"/>
    </location>
</feature>
<feature type="domain" description="IQ 37" evidence="5">
    <location>
        <begin position="2944"/>
        <end position="2973"/>
    </location>
</feature>
<feature type="domain" description="IQ 38" evidence="5">
    <location>
        <begin position="2994"/>
        <end position="3025"/>
    </location>
</feature>
<feature type="domain" description="IQ 39" evidence="5">
    <location>
        <begin position="3096"/>
        <end position="3125"/>
    </location>
</feature>
<feature type="domain" description="IQ 40" evidence="5">
    <location>
        <begin position="3119"/>
        <end position="3150"/>
    </location>
</feature>
<feature type="region of interest" description="Disordered" evidence="6">
    <location>
        <begin position="536"/>
        <end position="559"/>
    </location>
</feature>
<feature type="coiled-coil region" evidence="3">
    <location>
        <begin position="989"/>
        <end position="1014"/>
    </location>
</feature>
<feature type="modified residue" description="Phosphoserine" evidence="2">
    <location>
        <position position="212"/>
    </location>
</feature>
<feature type="modified residue" description="Phosphoserine" evidence="2">
    <location>
        <position position="215"/>
    </location>
</feature>
<feature type="modified residue" description="Phosphoserine" evidence="2">
    <location>
        <position position="300"/>
    </location>
</feature>
<feature type="modified residue" description="Phosphoserine" evidence="2">
    <location>
        <position position="325"/>
    </location>
</feature>
<feature type="modified residue" description="Phosphoserine" evidence="2">
    <location>
        <position position="540"/>
    </location>
</feature>
<feature type="modified residue" description="Phosphoserine" evidence="2">
    <location>
        <position position="1035"/>
    </location>
</feature>
<feature type="non-terminal residue">
    <location>
        <position position="1"/>
    </location>
</feature>
<feature type="non-terminal residue">
    <location>
        <position position="3371"/>
    </location>
</feature>
<name>ASPM_BOVIN</name>
<proteinExistence type="evidence at transcript level"/>
<organism>
    <name type="scientific">Bos taurus</name>
    <name type="common">Bovine</name>
    <dbReference type="NCBI Taxonomy" id="9913"/>
    <lineage>
        <taxon>Eukaryota</taxon>
        <taxon>Metazoa</taxon>
        <taxon>Chordata</taxon>
        <taxon>Craniata</taxon>
        <taxon>Vertebrata</taxon>
        <taxon>Euteleostomi</taxon>
        <taxon>Mammalia</taxon>
        <taxon>Eutheria</taxon>
        <taxon>Laurasiatheria</taxon>
        <taxon>Artiodactyla</taxon>
        <taxon>Ruminantia</taxon>
        <taxon>Pecora</taxon>
        <taxon>Bovidae</taxon>
        <taxon>Bovinae</taxon>
        <taxon>Bos</taxon>
    </lineage>
</organism>
<evidence type="ECO:0000250" key="1"/>
<evidence type="ECO:0000250" key="2">
    <source>
        <dbReference type="UniProtKB" id="Q8IZT6"/>
    </source>
</evidence>
<evidence type="ECO:0000255" key="3"/>
<evidence type="ECO:0000255" key="4">
    <source>
        <dbReference type="PROSITE-ProRule" id="PRU00044"/>
    </source>
</evidence>
<evidence type="ECO:0000255" key="5">
    <source>
        <dbReference type="PROSITE-ProRule" id="PRU00116"/>
    </source>
</evidence>
<evidence type="ECO:0000256" key="6">
    <source>
        <dbReference type="SAM" id="MobiDB-lite"/>
    </source>
</evidence>
<reference key="1">
    <citation type="journal article" date="2004" name="Hum. Mol. Genet.">
        <title>Adaptive evolution of ASPM, a major determinant of cerebral cortical size in humans.</title>
        <authorList>
            <person name="Evans P.D."/>
            <person name="Anderson J.R."/>
            <person name="Vallender E.J."/>
            <person name="Gilbert S.L."/>
            <person name="Malcom C.M."/>
            <person name="Dorus S."/>
            <person name="Lahn B.T."/>
        </authorList>
    </citation>
    <scope>NUCLEOTIDE SEQUENCE [MRNA]</scope>
</reference>
<accession>P62285</accession>
<comment type="function">
    <text evidence="1">Probable role in mitotic spindle regulation and coordination of mitotic processes. May have a preferential role in regulating neurogenesis (By similarity).</text>
</comment>
<comment type="subcellular location">
    <subcellularLocation>
        <location evidence="1">Cytoplasm</location>
    </subcellularLocation>
    <subcellularLocation>
        <location evidence="1">Cytoplasm</location>
        <location evidence="1">Cytoskeleton</location>
        <location evidence="1">Spindle</location>
    </subcellularLocation>
    <subcellularLocation>
        <location evidence="1">Nucleus</location>
    </subcellularLocation>
    <text evidence="1">The nuclear-cytoplasmic distribution could be regulated by the availability of calmodulin. Localizes to spindle poles during mitosis (By similarity).</text>
</comment>
<protein>
    <recommendedName>
        <fullName>Abnormal spindle-like microcephaly-associated protein homolog</fullName>
    </recommendedName>
</protein>
<keyword id="KW-0112">Calmodulin-binding</keyword>
<keyword id="KW-0131">Cell cycle</keyword>
<keyword id="KW-0132">Cell division</keyword>
<keyword id="KW-0175">Coiled coil</keyword>
<keyword id="KW-0963">Cytoplasm</keyword>
<keyword id="KW-0206">Cytoskeleton</keyword>
<keyword id="KW-0498">Mitosis</keyword>
<keyword id="KW-0539">Nucleus</keyword>
<keyword id="KW-0597">Phosphoprotein</keyword>
<keyword id="KW-1185">Reference proteome</keyword>
<keyword id="KW-0677">Repeat</keyword>
<dbReference type="EMBL" id="AY485424">
    <property type="protein sequence ID" value="AAR98745.1"/>
    <property type="molecule type" value="mRNA"/>
</dbReference>
<dbReference type="FunCoup" id="P62285">
    <property type="interactions" value="556"/>
</dbReference>
<dbReference type="STRING" id="9913.ENSBTAP00000010340"/>
<dbReference type="PaxDb" id="9913-ENSBTAP00000010340"/>
<dbReference type="eggNOG" id="KOG0165">
    <property type="taxonomic scope" value="Eukaryota"/>
</dbReference>
<dbReference type="InParanoid" id="P62285"/>
<dbReference type="OrthoDB" id="2148418at2759"/>
<dbReference type="Proteomes" id="UP000009136">
    <property type="component" value="Unplaced"/>
</dbReference>
<dbReference type="GO" id="GO:0005737">
    <property type="term" value="C:cytoplasm"/>
    <property type="evidence" value="ECO:0007669"/>
    <property type="project" value="UniProtKB-SubCell"/>
</dbReference>
<dbReference type="GO" id="GO:0005634">
    <property type="term" value="C:nucleus"/>
    <property type="evidence" value="ECO:0007669"/>
    <property type="project" value="UniProtKB-SubCell"/>
</dbReference>
<dbReference type="GO" id="GO:0000922">
    <property type="term" value="C:spindle pole"/>
    <property type="evidence" value="ECO:0000318"/>
    <property type="project" value="GO_Central"/>
</dbReference>
<dbReference type="GO" id="GO:0005516">
    <property type="term" value="F:calmodulin binding"/>
    <property type="evidence" value="ECO:0000318"/>
    <property type="project" value="GO_Central"/>
</dbReference>
<dbReference type="GO" id="GO:0051301">
    <property type="term" value="P:cell division"/>
    <property type="evidence" value="ECO:0007669"/>
    <property type="project" value="UniProtKB-KW"/>
</dbReference>
<dbReference type="GO" id="GO:0051295">
    <property type="term" value="P:establishment of meiotic spindle localization"/>
    <property type="evidence" value="ECO:0000318"/>
    <property type="project" value="GO_Central"/>
</dbReference>
<dbReference type="GO" id="GO:0000278">
    <property type="term" value="P:mitotic cell cycle"/>
    <property type="evidence" value="ECO:0000318"/>
    <property type="project" value="GO_Central"/>
</dbReference>
<dbReference type="GO" id="GO:0007051">
    <property type="term" value="P:spindle organization"/>
    <property type="evidence" value="ECO:0000318"/>
    <property type="project" value="GO_Central"/>
</dbReference>
<dbReference type="CDD" id="cd21223">
    <property type="entry name" value="CH_ASPM_rpt1"/>
    <property type="match status" value="1"/>
</dbReference>
<dbReference type="CDD" id="cd21224">
    <property type="entry name" value="CH_ASPM_rpt2"/>
    <property type="match status" value="1"/>
</dbReference>
<dbReference type="CDD" id="cd23767">
    <property type="entry name" value="IQCD"/>
    <property type="match status" value="1"/>
</dbReference>
<dbReference type="CDD" id="cd23766">
    <property type="entry name" value="IQCG"/>
    <property type="match status" value="1"/>
</dbReference>
<dbReference type="FunFam" id="1.10.418.10:FF:000051">
    <property type="entry name" value="Abnormal spindle-like microcephaly-associated protein homolog"/>
    <property type="match status" value="1"/>
</dbReference>
<dbReference type="FunFam" id="1.20.5.190:FF:000008">
    <property type="entry name" value="Abnormal spindle-like microcephaly-associated protein homolog"/>
    <property type="match status" value="6"/>
</dbReference>
<dbReference type="FunFam" id="1.20.5.190:FF:000009">
    <property type="entry name" value="Abnormal spindle-like microcephaly-associated protein homolog"/>
    <property type="match status" value="3"/>
</dbReference>
<dbReference type="FunFam" id="1.20.5.190:FF:000010">
    <property type="entry name" value="Abnormal spindle-like microcephaly-associated protein homolog"/>
    <property type="match status" value="2"/>
</dbReference>
<dbReference type="FunFam" id="1.20.5.190:FF:000016">
    <property type="entry name" value="Abnormal spindle-like microcephaly-associated protein homolog"/>
    <property type="match status" value="1"/>
</dbReference>
<dbReference type="FunFam" id="1.20.5.190:FF:000030">
    <property type="entry name" value="Abnormal spindle-like microcephaly-associated protein homolog"/>
    <property type="match status" value="1"/>
</dbReference>
<dbReference type="FunFam" id="1.20.5.190:FF:000059">
    <property type="entry name" value="Abnormal spindle-like microcephaly-associated protein homolog"/>
    <property type="match status" value="1"/>
</dbReference>
<dbReference type="Gene3D" id="1.20.5.190">
    <property type="match status" value="26"/>
</dbReference>
<dbReference type="Gene3D" id="1.10.418.10">
    <property type="entry name" value="Calponin-like domain"/>
    <property type="match status" value="2"/>
</dbReference>
<dbReference type="Gene3D" id="1.25.10.10">
    <property type="entry name" value="Leucine-rich Repeat Variant"/>
    <property type="match status" value="1"/>
</dbReference>
<dbReference type="InterPro" id="IPR011989">
    <property type="entry name" value="ARM-like"/>
</dbReference>
<dbReference type="InterPro" id="IPR016024">
    <property type="entry name" value="ARM-type_fold"/>
</dbReference>
<dbReference type="InterPro" id="IPR031549">
    <property type="entry name" value="ASH"/>
</dbReference>
<dbReference type="InterPro" id="IPR051185">
    <property type="entry name" value="ASPM"/>
</dbReference>
<dbReference type="InterPro" id="IPR001715">
    <property type="entry name" value="CH_dom"/>
</dbReference>
<dbReference type="InterPro" id="IPR036872">
    <property type="entry name" value="CH_dom_sf"/>
</dbReference>
<dbReference type="InterPro" id="IPR000048">
    <property type="entry name" value="IQ_motif_EF-hand-BS"/>
</dbReference>
<dbReference type="InterPro" id="IPR027417">
    <property type="entry name" value="P-loop_NTPase"/>
</dbReference>
<dbReference type="PANTHER" id="PTHR22706">
    <property type="entry name" value="ASSEMBLY FACTOR FOR SPINDLE MICROTUBULES"/>
    <property type="match status" value="1"/>
</dbReference>
<dbReference type="PANTHER" id="PTHR22706:SF1">
    <property type="entry name" value="ASSEMBLY FACTOR FOR SPINDLE MICROTUBULES"/>
    <property type="match status" value="1"/>
</dbReference>
<dbReference type="Pfam" id="PF15780">
    <property type="entry name" value="ASH"/>
    <property type="match status" value="1"/>
</dbReference>
<dbReference type="Pfam" id="PF00307">
    <property type="entry name" value="CH"/>
    <property type="match status" value="1"/>
</dbReference>
<dbReference type="Pfam" id="PF00612">
    <property type="entry name" value="IQ"/>
    <property type="match status" value="40"/>
</dbReference>
<dbReference type="SMART" id="SM00033">
    <property type="entry name" value="CH"/>
    <property type="match status" value="1"/>
</dbReference>
<dbReference type="SMART" id="SM00015">
    <property type="entry name" value="IQ"/>
    <property type="match status" value="64"/>
</dbReference>
<dbReference type="SUPFAM" id="SSF48371">
    <property type="entry name" value="ARM repeat"/>
    <property type="match status" value="1"/>
</dbReference>
<dbReference type="SUPFAM" id="SSF47576">
    <property type="entry name" value="Calponin-homology domain, CH-domain"/>
    <property type="match status" value="1"/>
</dbReference>
<dbReference type="SUPFAM" id="SSF52540">
    <property type="entry name" value="P-loop containing nucleoside triphosphate hydrolases"/>
    <property type="match status" value="15"/>
</dbReference>
<dbReference type="PROSITE" id="PS50021">
    <property type="entry name" value="CH"/>
    <property type="match status" value="2"/>
</dbReference>
<dbReference type="PROSITE" id="PS50096">
    <property type="entry name" value="IQ"/>
    <property type="match status" value="40"/>
</dbReference>
<gene>
    <name type="primary">ASPM</name>
</gene>